<accession>Q1GYT8</accession>
<gene>
    <name evidence="1" type="primary">trmD</name>
    <name type="ordered locus">Mfla_2332</name>
</gene>
<keyword id="KW-0963">Cytoplasm</keyword>
<keyword id="KW-0489">Methyltransferase</keyword>
<keyword id="KW-1185">Reference proteome</keyword>
<keyword id="KW-0949">S-adenosyl-L-methionine</keyword>
<keyword id="KW-0808">Transferase</keyword>
<keyword id="KW-0819">tRNA processing</keyword>
<comment type="function">
    <text evidence="1">Specifically methylates guanosine-37 in various tRNAs.</text>
</comment>
<comment type="catalytic activity">
    <reaction evidence="1">
        <text>guanosine(37) in tRNA + S-adenosyl-L-methionine = N(1)-methylguanosine(37) in tRNA + S-adenosyl-L-homocysteine + H(+)</text>
        <dbReference type="Rhea" id="RHEA:36899"/>
        <dbReference type="Rhea" id="RHEA-COMP:10145"/>
        <dbReference type="Rhea" id="RHEA-COMP:10147"/>
        <dbReference type="ChEBI" id="CHEBI:15378"/>
        <dbReference type="ChEBI" id="CHEBI:57856"/>
        <dbReference type="ChEBI" id="CHEBI:59789"/>
        <dbReference type="ChEBI" id="CHEBI:73542"/>
        <dbReference type="ChEBI" id="CHEBI:74269"/>
        <dbReference type="EC" id="2.1.1.228"/>
    </reaction>
</comment>
<comment type="subunit">
    <text evidence="1">Homodimer.</text>
</comment>
<comment type="subcellular location">
    <subcellularLocation>
        <location evidence="1">Cytoplasm</location>
    </subcellularLocation>
</comment>
<comment type="similarity">
    <text evidence="1">Belongs to the RNA methyltransferase TrmD family.</text>
</comment>
<feature type="chain" id="PRO_0000257431" description="tRNA (guanine-N(1)-)-methyltransferase">
    <location>
        <begin position="1"/>
        <end position="264"/>
    </location>
</feature>
<feature type="binding site" evidence="1">
    <location>
        <begin position="149"/>
        <end position="154"/>
    </location>
    <ligand>
        <name>S-adenosyl-L-methionine</name>
        <dbReference type="ChEBI" id="CHEBI:59789"/>
    </ligand>
</feature>
<name>TRMD_METFK</name>
<proteinExistence type="inferred from homology"/>
<protein>
    <recommendedName>
        <fullName evidence="1">tRNA (guanine-N(1)-)-methyltransferase</fullName>
        <ecNumber evidence="1">2.1.1.228</ecNumber>
    </recommendedName>
    <alternativeName>
        <fullName evidence="1">M1G-methyltransferase</fullName>
    </alternativeName>
    <alternativeName>
        <fullName evidence="1">tRNA [GM37] methyltransferase</fullName>
    </alternativeName>
</protein>
<reference key="1">
    <citation type="submission" date="2006-03" db="EMBL/GenBank/DDBJ databases">
        <title>Complete sequence of Methylobacillus flagellatus KT.</title>
        <authorList>
            <consortium name="US DOE Joint Genome Institute"/>
            <person name="Copeland A."/>
            <person name="Lucas S."/>
            <person name="Lapidus A."/>
            <person name="Barry K."/>
            <person name="Detter J.C."/>
            <person name="Glavina del Rio T."/>
            <person name="Hammon N."/>
            <person name="Israni S."/>
            <person name="Dalin E."/>
            <person name="Tice H."/>
            <person name="Pitluck S."/>
            <person name="Brettin T."/>
            <person name="Bruce D."/>
            <person name="Han C."/>
            <person name="Tapia R."/>
            <person name="Saunders E."/>
            <person name="Gilna P."/>
            <person name="Schmutz J."/>
            <person name="Larimer F."/>
            <person name="Land M."/>
            <person name="Kyrpides N."/>
            <person name="Anderson I."/>
            <person name="Richardson P."/>
        </authorList>
    </citation>
    <scope>NUCLEOTIDE SEQUENCE [LARGE SCALE GENOMIC DNA]</scope>
    <source>
        <strain>ATCC 51484 / DSM 6875 / VKM B-1610 / KT</strain>
    </source>
</reference>
<evidence type="ECO:0000255" key="1">
    <source>
        <dbReference type="HAMAP-Rule" id="MF_00605"/>
    </source>
</evidence>
<sequence length="264" mass="29529">MSEASHLQERCARQFDVVTLFPEMFDALTKFGISARAQERGIYELALWNPRDFTTDNYRTIDDRPYGGGPGMVMLAEPLEKAIAAAKVRQQSRGVENPRVIHLSPQGVPLKHEHVMQLKDVPGLILLASRYEGVDERLLSTLVDEEYSIGDYVLSGGEIPAMAILDAIIRQLPGSLGDAGSAEEDSFADGLLDCPHYTRPEVYAGQKVPEVLLSGNHAKIKRWRLKQSLARTRARRPDLLAARPLTKEESRLLMEIEQEQDSHN</sequence>
<organism>
    <name type="scientific">Methylobacillus flagellatus (strain ATCC 51484 / DSM 6875 / VKM B-1610 / KT)</name>
    <dbReference type="NCBI Taxonomy" id="265072"/>
    <lineage>
        <taxon>Bacteria</taxon>
        <taxon>Pseudomonadati</taxon>
        <taxon>Pseudomonadota</taxon>
        <taxon>Betaproteobacteria</taxon>
        <taxon>Nitrosomonadales</taxon>
        <taxon>Methylophilaceae</taxon>
        <taxon>Methylobacillus</taxon>
    </lineage>
</organism>
<dbReference type="EC" id="2.1.1.228" evidence="1"/>
<dbReference type="EMBL" id="CP000284">
    <property type="protein sequence ID" value="ABE50599.1"/>
    <property type="molecule type" value="Genomic_DNA"/>
</dbReference>
<dbReference type="RefSeq" id="WP_011480552.1">
    <property type="nucleotide sequence ID" value="NC_007947.1"/>
</dbReference>
<dbReference type="SMR" id="Q1GYT8"/>
<dbReference type="STRING" id="265072.Mfla_2332"/>
<dbReference type="KEGG" id="mfa:Mfla_2332"/>
<dbReference type="eggNOG" id="COG0336">
    <property type="taxonomic scope" value="Bacteria"/>
</dbReference>
<dbReference type="HOGENOM" id="CLU_047363_0_2_4"/>
<dbReference type="OrthoDB" id="9807416at2"/>
<dbReference type="Proteomes" id="UP000002440">
    <property type="component" value="Chromosome"/>
</dbReference>
<dbReference type="GO" id="GO:0005829">
    <property type="term" value="C:cytosol"/>
    <property type="evidence" value="ECO:0007669"/>
    <property type="project" value="TreeGrafter"/>
</dbReference>
<dbReference type="GO" id="GO:0052906">
    <property type="term" value="F:tRNA (guanine(37)-N1)-methyltransferase activity"/>
    <property type="evidence" value="ECO:0007669"/>
    <property type="project" value="UniProtKB-UniRule"/>
</dbReference>
<dbReference type="GO" id="GO:0002939">
    <property type="term" value="P:tRNA N1-guanine methylation"/>
    <property type="evidence" value="ECO:0007669"/>
    <property type="project" value="TreeGrafter"/>
</dbReference>
<dbReference type="CDD" id="cd18080">
    <property type="entry name" value="TrmD-like"/>
    <property type="match status" value="1"/>
</dbReference>
<dbReference type="FunFam" id="1.10.1270.20:FF:000001">
    <property type="entry name" value="tRNA (guanine-N(1)-)-methyltransferase"/>
    <property type="match status" value="1"/>
</dbReference>
<dbReference type="FunFam" id="3.40.1280.10:FF:000001">
    <property type="entry name" value="tRNA (guanine-N(1)-)-methyltransferase"/>
    <property type="match status" value="1"/>
</dbReference>
<dbReference type="Gene3D" id="3.40.1280.10">
    <property type="match status" value="1"/>
</dbReference>
<dbReference type="Gene3D" id="1.10.1270.20">
    <property type="entry name" value="tRNA(m1g37)methyltransferase, domain 2"/>
    <property type="match status" value="1"/>
</dbReference>
<dbReference type="HAMAP" id="MF_00605">
    <property type="entry name" value="TrmD"/>
    <property type="match status" value="1"/>
</dbReference>
<dbReference type="InterPro" id="IPR029028">
    <property type="entry name" value="Alpha/beta_knot_MTases"/>
</dbReference>
<dbReference type="InterPro" id="IPR023148">
    <property type="entry name" value="tRNA_m1G_MeTrfase_C_sf"/>
</dbReference>
<dbReference type="InterPro" id="IPR002649">
    <property type="entry name" value="tRNA_m1G_MeTrfase_TrmD"/>
</dbReference>
<dbReference type="InterPro" id="IPR029026">
    <property type="entry name" value="tRNA_m1G_MTases_N"/>
</dbReference>
<dbReference type="InterPro" id="IPR016009">
    <property type="entry name" value="tRNA_MeTrfase_TRMD/TRM10"/>
</dbReference>
<dbReference type="NCBIfam" id="NF000648">
    <property type="entry name" value="PRK00026.1"/>
    <property type="match status" value="1"/>
</dbReference>
<dbReference type="NCBIfam" id="TIGR00088">
    <property type="entry name" value="trmD"/>
    <property type="match status" value="1"/>
</dbReference>
<dbReference type="PANTHER" id="PTHR46417">
    <property type="entry name" value="TRNA (GUANINE-N(1)-)-METHYLTRANSFERASE"/>
    <property type="match status" value="1"/>
</dbReference>
<dbReference type="PANTHER" id="PTHR46417:SF1">
    <property type="entry name" value="TRNA (GUANINE-N(1)-)-METHYLTRANSFERASE"/>
    <property type="match status" value="1"/>
</dbReference>
<dbReference type="Pfam" id="PF01746">
    <property type="entry name" value="tRNA_m1G_MT"/>
    <property type="match status" value="1"/>
</dbReference>
<dbReference type="PIRSF" id="PIRSF000386">
    <property type="entry name" value="tRNA_mtase"/>
    <property type="match status" value="1"/>
</dbReference>
<dbReference type="SUPFAM" id="SSF75217">
    <property type="entry name" value="alpha/beta knot"/>
    <property type="match status" value="1"/>
</dbReference>